<name>LIPA_KOMPG</name>
<evidence type="ECO:0000255" key="1">
    <source>
        <dbReference type="HAMAP-Rule" id="MF_03123"/>
    </source>
</evidence>
<evidence type="ECO:0000255" key="2">
    <source>
        <dbReference type="PROSITE-ProRule" id="PRU01266"/>
    </source>
</evidence>
<evidence type="ECO:0000256" key="3">
    <source>
        <dbReference type="SAM" id="MobiDB-lite"/>
    </source>
</evidence>
<organism>
    <name type="scientific">Komagataella phaffii (strain GS115 / ATCC 20864)</name>
    <name type="common">Yeast</name>
    <name type="synonym">Pichia pastoris</name>
    <dbReference type="NCBI Taxonomy" id="644223"/>
    <lineage>
        <taxon>Eukaryota</taxon>
        <taxon>Fungi</taxon>
        <taxon>Dikarya</taxon>
        <taxon>Ascomycota</taxon>
        <taxon>Saccharomycotina</taxon>
        <taxon>Pichiomycetes</taxon>
        <taxon>Pichiales</taxon>
        <taxon>Pichiaceae</taxon>
        <taxon>Komagataella</taxon>
    </lineage>
</organism>
<comment type="function">
    <text evidence="1">Catalyzes the radical-mediated insertion of two sulfur atoms into the C-6 and C-8 positions of the octanoyl moiety bound to the lipoyl domains of lipoate-dependent enzymes, thereby converting the octanoylated domains into lipoylated derivatives.</text>
</comment>
<comment type="catalytic activity">
    <reaction evidence="1">
        <text>[[Fe-S] cluster scaffold protein carrying a second [4Fe-4S](2+) cluster] + N(6)-octanoyl-L-lysyl-[protein] + 2 oxidized [2Fe-2S]-[ferredoxin] + 2 S-adenosyl-L-methionine + 4 H(+) = [[Fe-S] cluster scaffold protein] + N(6)-[(R)-dihydrolipoyl]-L-lysyl-[protein] + 4 Fe(3+) + 2 hydrogen sulfide + 2 5'-deoxyadenosine + 2 L-methionine + 2 reduced [2Fe-2S]-[ferredoxin]</text>
        <dbReference type="Rhea" id="RHEA:16585"/>
        <dbReference type="Rhea" id="RHEA-COMP:9928"/>
        <dbReference type="Rhea" id="RHEA-COMP:10000"/>
        <dbReference type="Rhea" id="RHEA-COMP:10001"/>
        <dbReference type="Rhea" id="RHEA-COMP:10475"/>
        <dbReference type="Rhea" id="RHEA-COMP:14568"/>
        <dbReference type="Rhea" id="RHEA-COMP:14569"/>
        <dbReference type="ChEBI" id="CHEBI:15378"/>
        <dbReference type="ChEBI" id="CHEBI:17319"/>
        <dbReference type="ChEBI" id="CHEBI:29034"/>
        <dbReference type="ChEBI" id="CHEBI:29919"/>
        <dbReference type="ChEBI" id="CHEBI:33722"/>
        <dbReference type="ChEBI" id="CHEBI:33737"/>
        <dbReference type="ChEBI" id="CHEBI:33738"/>
        <dbReference type="ChEBI" id="CHEBI:57844"/>
        <dbReference type="ChEBI" id="CHEBI:59789"/>
        <dbReference type="ChEBI" id="CHEBI:78809"/>
        <dbReference type="ChEBI" id="CHEBI:83100"/>
        <dbReference type="EC" id="2.8.1.8"/>
    </reaction>
</comment>
<comment type="cofactor">
    <cofactor evidence="1">
        <name>[4Fe-4S] cluster</name>
        <dbReference type="ChEBI" id="CHEBI:49883"/>
    </cofactor>
    <text evidence="1">Binds 2 [4Fe-4S] clusters per subunit. One cluster is coordinated with 3 cysteines and an exchangeable S-adenosyl-L-methionine.</text>
</comment>
<comment type="pathway">
    <text evidence="1">Protein modification; protein lipoylation via endogenous pathway; protein N(6)-(lipoyl)lysine from octanoyl-[acyl-carrier-protein]: step 2/2.</text>
</comment>
<comment type="subcellular location">
    <subcellularLocation>
        <location evidence="1">Mitochondrion</location>
    </subcellularLocation>
</comment>
<comment type="miscellaneous">
    <text evidence="1">This protein may be expected to contain an N-terminal transit peptide but none has been predicted.</text>
</comment>
<comment type="similarity">
    <text evidence="1">Belongs to the radical SAM superfamily. Lipoyl synthase family.</text>
</comment>
<feature type="chain" id="PRO_0000398282" description="Lipoyl synthase, mitochondrial">
    <location>
        <begin position="1"/>
        <end position="417"/>
    </location>
</feature>
<feature type="domain" description="Radical SAM core" evidence="2">
    <location>
        <begin position="137"/>
        <end position="356"/>
    </location>
</feature>
<feature type="region of interest" description="Disordered" evidence="3">
    <location>
        <begin position="35"/>
        <end position="56"/>
    </location>
</feature>
<feature type="region of interest" description="Disordered" evidence="3">
    <location>
        <begin position="389"/>
        <end position="417"/>
    </location>
</feature>
<feature type="compositionally biased region" description="Basic residues" evidence="3">
    <location>
        <begin position="44"/>
        <end position="53"/>
    </location>
</feature>
<feature type="compositionally biased region" description="Basic and acidic residues" evidence="3">
    <location>
        <begin position="391"/>
        <end position="417"/>
    </location>
</feature>
<feature type="binding site" evidence="1">
    <location>
        <position position="122"/>
    </location>
    <ligand>
        <name>[4Fe-4S] cluster</name>
        <dbReference type="ChEBI" id="CHEBI:49883"/>
        <label>1</label>
    </ligand>
</feature>
<feature type="binding site" evidence="1">
    <location>
        <position position="127"/>
    </location>
    <ligand>
        <name>[4Fe-4S] cluster</name>
        <dbReference type="ChEBI" id="CHEBI:49883"/>
        <label>1</label>
    </ligand>
</feature>
<feature type="binding site" evidence="1">
    <location>
        <position position="133"/>
    </location>
    <ligand>
        <name>[4Fe-4S] cluster</name>
        <dbReference type="ChEBI" id="CHEBI:49883"/>
        <label>1</label>
    </ligand>
</feature>
<feature type="binding site" evidence="1">
    <location>
        <position position="152"/>
    </location>
    <ligand>
        <name>[4Fe-4S] cluster</name>
        <dbReference type="ChEBI" id="CHEBI:49883"/>
        <label>2</label>
        <note>4Fe-4S-S-AdoMet</note>
    </ligand>
</feature>
<feature type="binding site" evidence="1">
    <location>
        <position position="156"/>
    </location>
    <ligand>
        <name>[4Fe-4S] cluster</name>
        <dbReference type="ChEBI" id="CHEBI:49883"/>
        <label>2</label>
        <note>4Fe-4S-S-AdoMet</note>
    </ligand>
</feature>
<feature type="binding site" evidence="1">
    <location>
        <position position="159"/>
    </location>
    <ligand>
        <name>[4Fe-4S] cluster</name>
        <dbReference type="ChEBI" id="CHEBI:49883"/>
        <label>2</label>
        <note>4Fe-4S-S-AdoMet</note>
    </ligand>
</feature>
<feature type="binding site" evidence="1">
    <location>
        <position position="367"/>
    </location>
    <ligand>
        <name>[4Fe-4S] cluster</name>
        <dbReference type="ChEBI" id="CHEBI:49883"/>
        <label>1</label>
    </ligand>
</feature>
<accession>C4QYF2</accession>
<proteinExistence type="inferred from homology"/>
<reference key="1">
    <citation type="journal article" date="2009" name="Nat. Biotechnol.">
        <title>Genome sequence of the recombinant protein production host Pichia pastoris.</title>
        <authorList>
            <person name="De Schutter K."/>
            <person name="Lin Y.-C."/>
            <person name="Tiels P."/>
            <person name="Van Hecke A."/>
            <person name="Glinka S."/>
            <person name="Weber-Lehmann J."/>
            <person name="Rouze P."/>
            <person name="Van de Peer Y."/>
            <person name="Callewaert N."/>
        </authorList>
    </citation>
    <scope>NUCLEOTIDE SEQUENCE [LARGE SCALE GENOMIC DNA]</scope>
    <source>
        <strain>GS115 / ATCC 20864</strain>
    </source>
</reference>
<dbReference type="EC" id="2.8.1.8" evidence="1"/>
<dbReference type="EMBL" id="FN392319">
    <property type="protein sequence ID" value="CAY68275.1"/>
    <property type="molecule type" value="Genomic_DNA"/>
</dbReference>
<dbReference type="RefSeq" id="XP_002490556.1">
    <property type="nucleotide sequence ID" value="XM_002490511.1"/>
</dbReference>
<dbReference type="SMR" id="C4QYF2"/>
<dbReference type="FunCoup" id="C4QYF2">
    <property type="interactions" value="590"/>
</dbReference>
<dbReference type="STRING" id="644223.C4QYF2"/>
<dbReference type="EnsemblFungi" id="CAY68275">
    <property type="protein sequence ID" value="CAY68275"/>
    <property type="gene ID" value="PAS_chr1-4_0425"/>
</dbReference>
<dbReference type="GeneID" id="8197013"/>
<dbReference type="KEGG" id="ppa:PAS_chr1-4_0425"/>
<dbReference type="eggNOG" id="KOG2672">
    <property type="taxonomic scope" value="Eukaryota"/>
</dbReference>
<dbReference type="HOGENOM" id="CLU_033144_0_2_1"/>
<dbReference type="InParanoid" id="C4QYF2"/>
<dbReference type="OMA" id="PYCDIDF"/>
<dbReference type="OrthoDB" id="3231at2759"/>
<dbReference type="UniPathway" id="UPA00538">
    <property type="reaction ID" value="UER00593"/>
</dbReference>
<dbReference type="Proteomes" id="UP000000314">
    <property type="component" value="Chromosome 1"/>
</dbReference>
<dbReference type="GO" id="GO:0005739">
    <property type="term" value="C:mitochondrion"/>
    <property type="evidence" value="ECO:0007669"/>
    <property type="project" value="UniProtKB-SubCell"/>
</dbReference>
<dbReference type="GO" id="GO:0051539">
    <property type="term" value="F:4 iron, 4 sulfur cluster binding"/>
    <property type="evidence" value="ECO:0007669"/>
    <property type="project" value="UniProtKB-UniRule"/>
</dbReference>
<dbReference type="GO" id="GO:0016992">
    <property type="term" value="F:lipoate synthase activity"/>
    <property type="evidence" value="ECO:0007669"/>
    <property type="project" value="UniProtKB-UniRule"/>
</dbReference>
<dbReference type="GO" id="GO:0046872">
    <property type="term" value="F:metal ion binding"/>
    <property type="evidence" value="ECO:0007669"/>
    <property type="project" value="UniProtKB-KW"/>
</dbReference>
<dbReference type="CDD" id="cd01335">
    <property type="entry name" value="Radical_SAM"/>
    <property type="match status" value="1"/>
</dbReference>
<dbReference type="FunFam" id="3.20.20.70:FF:000036">
    <property type="entry name" value="Lipoyl synthase, mitochondrial"/>
    <property type="match status" value="1"/>
</dbReference>
<dbReference type="Gene3D" id="3.20.20.70">
    <property type="entry name" value="Aldolase class I"/>
    <property type="match status" value="1"/>
</dbReference>
<dbReference type="HAMAP" id="MF_00206">
    <property type="entry name" value="Lipoyl_synth"/>
    <property type="match status" value="1"/>
</dbReference>
<dbReference type="InterPro" id="IPR013785">
    <property type="entry name" value="Aldolase_TIM"/>
</dbReference>
<dbReference type="InterPro" id="IPR006638">
    <property type="entry name" value="Elp3/MiaA/NifB-like_rSAM"/>
</dbReference>
<dbReference type="InterPro" id="IPR031691">
    <property type="entry name" value="LIAS_N"/>
</dbReference>
<dbReference type="InterPro" id="IPR003698">
    <property type="entry name" value="Lipoyl_synth"/>
</dbReference>
<dbReference type="InterPro" id="IPR007197">
    <property type="entry name" value="rSAM"/>
</dbReference>
<dbReference type="NCBIfam" id="TIGR00510">
    <property type="entry name" value="lipA"/>
    <property type="match status" value="1"/>
</dbReference>
<dbReference type="NCBIfam" id="NF004019">
    <property type="entry name" value="PRK05481.1"/>
    <property type="match status" value="1"/>
</dbReference>
<dbReference type="NCBIfam" id="NF009544">
    <property type="entry name" value="PRK12928.1"/>
    <property type="match status" value="1"/>
</dbReference>
<dbReference type="PANTHER" id="PTHR10949">
    <property type="entry name" value="LIPOYL SYNTHASE"/>
    <property type="match status" value="1"/>
</dbReference>
<dbReference type="PANTHER" id="PTHR10949:SF0">
    <property type="entry name" value="LIPOYL SYNTHASE, MITOCHONDRIAL"/>
    <property type="match status" value="1"/>
</dbReference>
<dbReference type="Pfam" id="PF16881">
    <property type="entry name" value="LIAS_N"/>
    <property type="match status" value="1"/>
</dbReference>
<dbReference type="Pfam" id="PF04055">
    <property type="entry name" value="Radical_SAM"/>
    <property type="match status" value="1"/>
</dbReference>
<dbReference type="SFLD" id="SFLDF00271">
    <property type="entry name" value="lipoyl_synthase"/>
    <property type="match status" value="1"/>
</dbReference>
<dbReference type="SFLD" id="SFLDS00029">
    <property type="entry name" value="Radical_SAM"/>
    <property type="match status" value="1"/>
</dbReference>
<dbReference type="SMART" id="SM00729">
    <property type="entry name" value="Elp3"/>
    <property type="match status" value="1"/>
</dbReference>
<dbReference type="SUPFAM" id="SSF102114">
    <property type="entry name" value="Radical SAM enzymes"/>
    <property type="match status" value="1"/>
</dbReference>
<dbReference type="PROSITE" id="PS51918">
    <property type="entry name" value="RADICAL_SAM"/>
    <property type="match status" value="1"/>
</dbReference>
<gene>
    <name type="ordered locus">PAS_chr1-4_0425</name>
</gene>
<sequence>MLSTRVVRLPKVISGGNKQLARGLASLSDEKSLNEANPTDLAGLKRKAKRRPTKLADELKTGPSFADFVTGKAKDMLVDPLELARNDPNARLPSWLKTQIPKGKSFHHLKSDLKELKLSTVCEEAKCPNIGECWGGKKSEATATIMLMGDTCTRGCRFCSVKTNRNPAPPDPNEPENTAEAISRWGLGYVVLTTVDRDDLPDGGAHHLASTVTKIKEKAPQILVECLSGDFRGNLEMAKVLASSPLDVFAHNLETVEDLTPHIRDRRATYRQSLSVLRAAKEANPRLVTKTSLMLGFGETDDQILQTLHDLRNISCDVVTFGQYMRPTKRHMKVVEYVTPSKFEYWRDKALEMGFLYCASGPLVRSSYKAGEAFIENVIKKRRTNVGAIEEQQHDKENNNLLLSKEDEKTTQEKANF</sequence>
<protein>
    <recommendedName>
        <fullName evidence="1">Lipoyl synthase, mitochondrial</fullName>
        <ecNumber evidence="1">2.8.1.8</ecNumber>
    </recommendedName>
    <alternativeName>
        <fullName evidence="1">Lipoate synthase</fullName>
        <shortName evidence="1">LS</shortName>
        <shortName evidence="1">Lip-syn</shortName>
    </alternativeName>
    <alternativeName>
        <fullName evidence="1">Lipoic acid synthase</fullName>
    </alternativeName>
</protein>
<keyword id="KW-0004">4Fe-4S</keyword>
<keyword id="KW-0408">Iron</keyword>
<keyword id="KW-0411">Iron-sulfur</keyword>
<keyword id="KW-0479">Metal-binding</keyword>
<keyword id="KW-0496">Mitochondrion</keyword>
<keyword id="KW-1185">Reference proteome</keyword>
<keyword id="KW-0949">S-adenosyl-L-methionine</keyword>
<keyword id="KW-0808">Transferase</keyword>